<evidence type="ECO:0000255" key="1">
    <source>
        <dbReference type="PROSITE-ProRule" id="PRU00541"/>
    </source>
</evidence>
<evidence type="ECO:0000255" key="2">
    <source>
        <dbReference type="PROSITE-ProRule" id="PRU00542"/>
    </source>
</evidence>
<evidence type="ECO:0000256" key="3">
    <source>
        <dbReference type="SAM" id="MobiDB-lite"/>
    </source>
</evidence>
<evidence type="ECO:0000269" key="4">
    <source>
    </source>
</evidence>
<evidence type="ECO:0000269" key="5">
    <source>
    </source>
</evidence>
<evidence type="ECO:0000303" key="6">
    <source>
    </source>
</evidence>
<evidence type="ECO:0000305" key="7"/>
<comment type="function">
    <text evidence="4 5">ATP-dependent RNA helicase that plays a role in various aspects of RNA metabolism including the regulation of mRNA export and the levels of pre-ribosomal RNA. Regulates the stability and synthesis of pre-ribosomal RNA and thereby regulates cell proliferation (PubMed:29618122). Also possesses antiviral activity by recognizing gammaherpesvirus transcripts in the context of lytic reactivation (PubMed:36298642).</text>
</comment>
<comment type="catalytic activity">
    <reaction evidence="4">
        <text>ATP + H2O = ADP + phosphate + H(+)</text>
        <dbReference type="Rhea" id="RHEA:13065"/>
        <dbReference type="ChEBI" id="CHEBI:15377"/>
        <dbReference type="ChEBI" id="CHEBI:15378"/>
        <dbReference type="ChEBI" id="CHEBI:30616"/>
        <dbReference type="ChEBI" id="CHEBI:43474"/>
        <dbReference type="ChEBI" id="CHEBI:456216"/>
        <dbReference type="EC" id="3.6.4.13"/>
    </reaction>
</comment>
<comment type="interaction">
    <interactant intactId="EBI-719274">
        <id>Q9Y6V7</id>
    </interactant>
    <interactant intactId="EBI-2559100">
        <id>O75459</id>
        <label>PAGE1</label>
    </interactant>
    <organismsDiffer>false</organismsDiffer>
    <experiments>4</experiments>
</comment>
<comment type="interaction">
    <interactant intactId="EBI-719274">
        <id>Q9Y6V7</id>
    </interactant>
    <interactant intactId="EBI-712466">
        <id>Q16623</id>
        <label>STX1A</label>
    </interactant>
    <organismsDiffer>false</organismsDiffer>
    <experiments>3</experiments>
</comment>
<comment type="subcellular location">
    <subcellularLocation>
        <location evidence="4">Nucleus</location>
        <location evidence="4">Nucleolus</location>
    </subcellularLocation>
</comment>
<comment type="alternative products">
    <event type="alternative splicing"/>
    <isoform>
        <id>Q9Y6V7-1</id>
        <name>1</name>
        <sequence type="displayed"/>
    </isoform>
    <isoform>
        <id>Q9Y6V7-2</id>
        <name>2</name>
        <sequence type="described" ref="VSP_056367 VSP_056368 VSP_056369"/>
    </isoform>
</comment>
<comment type="similarity">
    <text evidence="7">Belongs to the DEAD box helicase family. DDX49/DBP8 subfamily.</text>
</comment>
<proteinExistence type="evidence at protein level"/>
<name>DDX49_HUMAN</name>
<protein>
    <recommendedName>
        <fullName>Probable ATP-dependent RNA helicase DDX49</fullName>
        <ecNumber>3.6.4.13</ecNumber>
    </recommendedName>
    <alternativeName>
        <fullName>DEAD box protein 49</fullName>
    </alternativeName>
</protein>
<organism>
    <name type="scientific">Homo sapiens</name>
    <name type="common">Human</name>
    <dbReference type="NCBI Taxonomy" id="9606"/>
    <lineage>
        <taxon>Eukaryota</taxon>
        <taxon>Metazoa</taxon>
        <taxon>Chordata</taxon>
        <taxon>Craniata</taxon>
        <taxon>Vertebrata</taxon>
        <taxon>Euteleostomi</taxon>
        <taxon>Mammalia</taxon>
        <taxon>Eutheria</taxon>
        <taxon>Euarchontoglires</taxon>
        <taxon>Primates</taxon>
        <taxon>Haplorrhini</taxon>
        <taxon>Catarrhini</taxon>
        <taxon>Hominidae</taxon>
        <taxon>Homo</taxon>
    </lineage>
</organism>
<dbReference type="EC" id="3.6.4.13"/>
<dbReference type="EMBL" id="AK223294">
    <property type="protein sequence ID" value="BAD97014.1"/>
    <property type="molecule type" value="mRNA"/>
</dbReference>
<dbReference type="EMBL" id="AC002985">
    <property type="protein sequence ID" value="AAB81544.1"/>
    <property type="molecule type" value="Genomic_DNA"/>
</dbReference>
<dbReference type="EMBL" id="CH471106">
    <property type="protein sequence ID" value="EAW84758.1"/>
    <property type="molecule type" value="Genomic_DNA"/>
</dbReference>
<dbReference type="EMBL" id="BC000979">
    <property type="protein sequence ID" value="AAH00979.2"/>
    <property type="molecule type" value="mRNA"/>
</dbReference>
<dbReference type="EMBL" id="BC002674">
    <property type="protein sequence ID" value="AAH02674.1"/>
    <property type="molecule type" value="mRNA"/>
</dbReference>
<dbReference type="CCDS" id="CCDS12390.1">
    <molecule id="Q9Y6V7-1"/>
</dbReference>
<dbReference type="RefSeq" id="NP_061943.2">
    <molecule id="Q9Y6V7-1"/>
    <property type="nucleotide sequence ID" value="NM_019070.4"/>
</dbReference>
<dbReference type="SMR" id="Q9Y6V7"/>
<dbReference type="BioGRID" id="120040">
    <property type="interactions" value="79"/>
</dbReference>
<dbReference type="FunCoup" id="Q9Y6V7">
    <property type="interactions" value="2577"/>
</dbReference>
<dbReference type="IntAct" id="Q9Y6V7">
    <property type="interactions" value="37"/>
</dbReference>
<dbReference type="MINT" id="Q9Y6V7"/>
<dbReference type="STRING" id="9606.ENSP00000247003"/>
<dbReference type="iPTMnet" id="Q9Y6V7"/>
<dbReference type="PhosphoSitePlus" id="Q9Y6V7"/>
<dbReference type="SwissPalm" id="Q9Y6V7"/>
<dbReference type="BioMuta" id="DDX49"/>
<dbReference type="DMDM" id="74753527"/>
<dbReference type="jPOST" id="Q9Y6V7"/>
<dbReference type="MassIVE" id="Q9Y6V7"/>
<dbReference type="PaxDb" id="9606-ENSP00000247003"/>
<dbReference type="PeptideAtlas" id="Q9Y6V7"/>
<dbReference type="ProteomicsDB" id="79228"/>
<dbReference type="ProteomicsDB" id="86799">
    <molecule id="Q9Y6V7-1"/>
</dbReference>
<dbReference type="Pumba" id="Q9Y6V7"/>
<dbReference type="Antibodypedia" id="15208">
    <property type="antibodies" value="129 antibodies from 22 providers"/>
</dbReference>
<dbReference type="DNASU" id="54555"/>
<dbReference type="Ensembl" id="ENST00000247003.9">
    <molecule id="Q9Y6V7-1"/>
    <property type="protein sequence ID" value="ENSP00000247003.3"/>
    <property type="gene ID" value="ENSG00000105671.12"/>
</dbReference>
<dbReference type="GeneID" id="54555"/>
<dbReference type="KEGG" id="hsa:54555"/>
<dbReference type="MANE-Select" id="ENST00000247003.9">
    <property type="protein sequence ID" value="ENSP00000247003.3"/>
    <property type="RefSeq nucleotide sequence ID" value="NM_019070.5"/>
    <property type="RefSeq protein sequence ID" value="NP_061943.2"/>
</dbReference>
<dbReference type="UCSC" id="uc002nkq.3">
    <molecule id="Q9Y6V7-1"/>
    <property type="organism name" value="human"/>
</dbReference>
<dbReference type="AGR" id="HGNC:18684"/>
<dbReference type="CTD" id="54555"/>
<dbReference type="DisGeNET" id="54555"/>
<dbReference type="GeneCards" id="DDX49"/>
<dbReference type="HGNC" id="HGNC:18684">
    <property type="gene designation" value="DDX49"/>
</dbReference>
<dbReference type="HPA" id="ENSG00000105671">
    <property type="expression patterns" value="Low tissue specificity"/>
</dbReference>
<dbReference type="neXtProt" id="NX_Q9Y6V7"/>
<dbReference type="OpenTargets" id="ENSG00000105671"/>
<dbReference type="PharmGKB" id="PA134956171"/>
<dbReference type="VEuPathDB" id="HostDB:ENSG00000105671"/>
<dbReference type="eggNOG" id="KOG0333">
    <property type="taxonomic scope" value="Eukaryota"/>
</dbReference>
<dbReference type="eggNOG" id="KOG0340">
    <property type="taxonomic scope" value="Eukaryota"/>
</dbReference>
<dbReference type="GeneTree" id="ENSGT00730000111231"/>
<dbReference type="HOGENOM" id="CLU_003041_1_1_1"/>
<dbReference type="InParanoid" id="Q9Y6V7"/>
<dbReference type="OMA" id="IMIFTDT"/>
<dbReference type="OrthoDB" id="10261904at2759"/>
<dbReference type="PAN-GO" id="Q9Y6V7">
    <property type="GO annotations" value="2 GO annotations based on evolutionary models"/>
</dbReference>
<dbReference type="PhylomeDB" id="Q9Y6V7"/>
<dbReference type="TreeFam" id="TF320511"/>
<dbReference type="PathwayCommons" id="Q9Y6V7"/>
<dbReference type="Reactome" id="R-HSA-6790901">
    <property type="pathway name" value="rRNA modification in the nucleus and cytosol"/>
</dbReference>
<dbReference type="Reactome" id="R-HSA-6791226">
    <property type="pathway name" value="Major pathway of rRNA processing in the nucleolus and cytosol"/>
</dbReference>
<dbReference type="SignaLink" id="Q9Y6V7"/>
<dbReference type="BioGRID-ORCS" id="54555">
    <property type="hits" value="766 hits in 1155 CRISPR screens"/>
</dbReference>
<dbReference type="CD-CODE" id="91857CE7">
    <property type="entry name" value="Nucleolus"/>
</dbReference>
<dbReference type="ChiTaRS" id="DDX49">
    <property type="organism name" value="human"/>
</dbReference>
<dbReference type="GenomeRNAi" id="54555"/>
<dbReference type="Pharos" id="Q9Y6V7">
    <property type="development level" value="Tbio"/>
</dbReference>
<dbReference type="PRO" id="PR:Q9Y6V7"/>
<dbReference type="Proteomes" id="UP000005640">
    <property type="component" value="Chromosome 19"/>
</dbReference>
<dbReference type="RNAct" id="Q9Y6V7">
    <property type="molecule type" value="protein"/>
</dbReference>
<dbReference type="Bgee" id="ENSG00000105671">
    <property type="expression patterns" value="Expressed in cortical plate and 194 other cell types or tissues"/>
</dbReference>
<dbReference type="ExpressionAtlas" id="Q9Y6V7">
    <property type="expression patterns" value="baseline and differential"/>
</dbReference>
<dbReference type="GO" id="GO:0005730">
    <property type="term" value="C:nucleolus"/>
    <property type="evidence" value="ECO:0007669"/>
    <property type="project" value="UniProtKB-SubCell"/>
</dbReference>
<dbReference type="GO" id="GO:0005654">
    <property type="term" value="C:nucleoplasm"/>
    <property type="evidence" value="ECO:0000314"/>
    <property type="project" value="UniProtKB"/>
</dbReference>
<dbReference type="GO" id="GO:0005634">
    <property type="term" value="C:nucleus"/>
    <property type="evidence" value="ECO:0000318"/>
    <property type="project" value="GO_Central"/>
</dbReference>
<dbReference type="GO" id="GO:0005524">
    <property type="term" value="F:ATP binding"/>
    <property type="evidence" value="ECO:0007669"/>
    <property type="project" value="UniProtKB-KW"/>
</dbReference>
<dbReference type="GO" id="GO:0016887">
    <property type="term" value="F:ATP hydrolysis activity"/>
    <property type="evidence" value="ECO:0007669"/>
    <property type="project" value="RHEA"/>
</dbReference>
<dbReference type="GO" id="GO:0003723">
    <property type="term" value="F:RNA binding"/>
    <property type="evidence" value="ECO:0007005"/>
    <property type="project" value="UniProtKB"/>
</dbReference>
<dbReference type="GO" id="GO:0003724">
    <property type="term" value="F:RNA helicase activity"/>
    <property type="evidence" value="ECO:0000314"/>
    <property type="project" value="UniProtKB"/>
</dbReference>
<dbReference type="GO" id="GO:0030307">
    <property type="term" value="P:positive regulation of cell growth"/>
    <property type="evidence" value="ECO:0000315"/>
    <property type="project" value="CACAO"/>
</dbReference>
<dbReference type="GO" id="GO:0044357">
    <property type="term" value="P:regulation of rRNA stability"/>
    <property type="evidence" value="ECO:0000315"/>
    <property type="project" value="CACAO"/>
</dbReference>
<dbReference type="GO" id="GO:0006364">
    <property type="term" value="P:rRNA processing"/>
    <property type="evidence" value="ECO:0000318"/>
    <property type="project" value="GO_Central"/>
</dbReference>
<dbReference type="CDD" id="cd17955">
    <property type="entry name" value="DEADc_DDX49"/>
    <property type="match status" value="1"/>
</dbReference>
<dbReference type="CDD" id="cd18787">
    <property type="entry name" value="SF2_C_DEAD"/>
    <property type="match status" value="1"/>
</dbReference>
<dbReference type="FunFam" id="3.40.50.300:FF:000892">
    <property type="entry name" value="probable ATP-dependent RNA helicase DDX49"/>
    <property type="match status" value="1"/>
</dbReference>
<dbReference type="FunFam" id="3.40.50.300:FF:000993">
    <property type="entry name" value="probable ATP-dependent RNA helicase DDX49"/>
    <property type="match status" value="1"/>
</dbReference>
<dbReference type="Gene3D" id="3.40.50.300">
    <property type="entry name" value="P-loop containing nucleotide triphosphate hydrolases"/>
    <property type="match status" value="2"/>
</dbReference>
<dbReference type="InterPro" id="IPR011545">
    <property type="entry name" value="DEAD/DEAH_box_helicase_dom"/>
</dbReference>
<dbReference type="InterPro" id="IPR050079">
    <property type="entry name" value="DEAD_box_RNA_helicase"/>
</dbReference>
<dbReference type="InterPro" id="IPR014001">
    <property type="entry name" value="Helicase_ATP-bd"/>
</dbReference>
<dbReference type="InterPro" id="IPR001650">
    <property type="entry name" value="Helicase_C-like"/>
</dbReference>
<dbReference type="InterPro" id="IPR027417">
    <property type="entry name" value="P-loop_NTPase"/>
</dbReference>
<dbReference type="InterPro" id="IPR000629">
    <property type="entry name" value="RNA-helicase_DEAD-box_CS"/>
</dbReference>
<dbReference type="InterPro" id="IPR014014">
    <property type="entry name" value="RNA_helicase_DEAD_Q_motif"/>
</dbReference>
<dbReference type="PANTHER" id="PTHR47959">
    <property type="entry name" value="ATP-DEPENDENT RNA HELICASE RHLE-RELATED"/>
    <property type="match status" value="1"/>
</dbReference>
<dbReference type="PANTHER" id="PTHR47959:SF25">
    <property type="entry name" value="RNA HELICASE"/>
    <property type="match status" value="1"/>
</dbReference>
<dbReference type="Pfam" id="PF00270">
    <property type="entry name" value="DEAD"/>
    <property type="match status" value="1"/>
</dbReference>
<dbReference type="Pfam" id="PF00271">
    <property type="entry name" value="Helicase_C"/>
    <property type="match status" value="1"/>
</dbReference>
<dbReference type="SMART" id="SM00487">
    <property type="entry name" value="DEXDc"/>
    <property type="match status" value="1"/>
</dbReference>
<dbReference type="SMART" id="SM00490">
    <property type="entry name" value="HELICc"/>
    <property type="match status" value="1"/>
</dbReference>
<dbReference type="SUPFAM" id="SSF52540">
    <property type="entry name" value="P-loop containing nucleoside triphosphate hydrolases"/>
    <property type="match status" value="1"/>
</dbReference>
<dbReference type="PROSITE" id="PS00039">
    <property type="entry name" value="DEAD_ATP_HELICASE"/>
    <property type="match status" value="1"/>
</dbReference>
<dbReference type="PROSITE" id="PS51192">
    <property type="entry name" value="HELICASE_ATP_BIND_1"/>
    <property type="match status" value="1"/>
</dbReference>
<dbReference type="PROSITE" id="PS51194">
    <property type="entry name" value="HELICASE_CTER"/>
    <property type="match status" value="1"/>
</dbReference>
<dbReference type="PROSITE" id="PS51195">
    <property type="entry name" value="Q_MOTIF"/>
    <property type="match status" value="1"/>
</dbReference>
<sequence>MAGFAELGLSSWLVEQCRQLGLKQPTPVQLGCIPAILEGRDCLGCAKTGSGKTAAFVLPILQKLSEDPYGIFCLVLTPTRELAYQIAEQFRVLGKPLGLKDCIIVGGMDMVAQALELSRKPHVVIATPGRLADHLRSSNTFSIKKIRFLVMDEADRLLEQGCTDFTVDLEAILAAVPARRQTLLFSATLTDTLRELQGLATNQPFFWEAQAPVSTVEQLDQRYLLVPEKVKDAYLVHLIQRFQDEHEDWSIIIFTNTCKTCQILCMMLRKFSFPTVALHSMMKQKERFAALAKFKSSIYRILIATDVASRGLDIPTVQVVINHNTPGLPKIYIHRVGRTARAGRQGQAITLVTQYDIHLVHAIEEQIKKKLEEFSVEEAEVLQILTQVNVVRRECEIKLEAAHFDEKKEINKRKQLILEGKDPDLEAKRKAELAKIKQKNRRFKEKVEETLKRQKAGRAGHKGRPPRTPSGSHSGPVPSQGLV</sequence>
<feature type="chain" id="PRO_0000055052" description="Probable ATP-dependent RNA helicase DDX49">
    <location>
        <begin position="1"/>
        <end position="483"/>
    </location>
</feature>
<feature type="domain" description="Helicase ATP-binding" evidence="1">
    <location>
        <begin position="33"/>
        <end position="207"/>
    </location>
</feature>
<feature type="domain" description="Helicase C-terminal" evidence="2">
    <location>
        <begin position="218"/>
        <end position="382"/>
    </location>
</feature>
<feature type="region of interest" description="Disordered" evidence="3">
    <location>
        <begin position="444"/>
        <end position="483"/>
    </location>
</feature>
<feature type="short sequence motif" description="Q motif">
    <location>
        <begin position="2"/>
        <end position="30"/>
    </location>
</feature>
<feature type="short sequence motif" description="DEAD box">
    <location>
        <begin position="152"/>
        <end position="155"/>
    </location>
</feature>
<feature type="compositionally biased region" description="Basic residues" evidence="3">
    <location>
        <begin position="453"/>
        <end position="465"/>
    </location>
</feature>
<feature type="binding site" evidence="1">
    <location>
        <begin position="46"/>
        <end position="53"/>
    </location>
    <ligand>
        <name>ATP</name>
        <dbReference type="ChEBI" id="CHEBI:30616"/>
    </ligand>
</feature>
<feature type="splice variant" id="VSP_056367" description="In isoform 2." evidence="6">
    <location>
        <begin position="1"/>
        <end position="107"/>
    </location>
</feature>
<feature type="splice variant" id="VSP_056368" description="In isoform 2." evidence="6">
    <original>LDIPTVQVVINHNTPGLPKIYIHRVGRTARAGRQGQAITLVTQYDIHLVH</original>
    <variation>ADQPPLPPGAWTSLRYRWSSTTTPPGSPRSTSTESAGRPVQGGRVRPSRW</variation>
    <location>
        <begin position="312"/>
        <end position="361"/>
    </location>
</feature>
<feature type="splice variant" id="VSP_056369" description="In isoform 2." evidence="6">
    <location>
        <begin position="362"/>
        <end position="483"/>
    </location>
</feature>
<feature type="sequence variant" id="VAR_033858" description="In dbSNP:rs35802425.">
    <original>R</original>
    <variation>H</variation>
    <location>
        <position position="222"/>
    </location>
</feature>
<feature type="sequence variant" id="VAR_033859" description="In dbSNP:rs35614860.">
    <original>S</original>
    <variation>A</variation>
    <location>
        <position position="296"/>
    </location>
</feature>
<feature type="sequence variant" id="VAR_052167" description="In dbSNP:rs16995781.">
    <original>R</original>
    <variation>W</variation>
    <location>
        <position position="413"/>
    </location>
</feature>
<feature type="sequence conflict" description="In Ref. 1; BAD97014." evidence="7" ref="1">
    <original>A</original>
    <variation>V</variation>
    <location>
        <position position="35"/>
    </location>
</feature>
<keyword id="KW-0025">Alternative splicing</keyword>
<keyword id="KW-0067">ATP-binding</keyword>
<keyword id="KW-0347">Helicase</keyword>
<keyword id="KW-0378">Hydrolase</keyword>
<keyword id="KW-0547">Nucleotide-binding</keyword>
<keyword id="KW-0539">Nucleus</keyword>
<keyword id="KW-1267">Proteomics identification</keyword>
<keyword id="KW-1185">Reference proteome</keyword>
<keyword id="KW-0694">RNA-binding</keyword>
<accession>Q9Y6V7</accession>
<accession>E7ENA0</accession>
<accession>Q53FJ1</accession>
<accession>Q9BVQ8</accession>
<gene>
    <name type="primary">DDX49</name>
</gene>
<reference key="1">
    <citation type="submission" date="2005-04" db="EMBL/GenBank/DDBJ databases">
        <authorList>
            <person name="Suzuki Y."/>
            <person name="Sugano S."/>
            <person name="Totoki Y."/>
            <person name="Toyoda A."/>
            <person name="Takeda T."/>
            <person name="Sakaki Y."/>
            <person name="Tanaka A."/>
            <person name="Yokoyama S."/>
        </authorList>
    </citation>
    <scope>NUCLEOTIDE SEQUENCE [LARGE SCALE MRNA] (ISOFORM 1)</scope>
    <source>
        <tissue>Synovial cell</tissue>
    </source>
</reference>
<reference key="2">
    <citation type="journal article" date="2004" name="Nature">
        <title>The DNA sequence and biology of human chromosome 19.</title>
        <authorList>
            <person name="Grimwood J."/>
            <person name="Gordon L.A."/>
            <person name="Olsen A.S."/>
            <person name="Terry A."/>
            <person name="Schmutz J."/>
            <person name="Lamerdin J.E."/>
            <person name="Hellsten U."/>
            <person name="Goodstein D."/>
            <person name="Couronne O."/>
            <person name="Tran-Gyamfi M."/>
            <person name="Aerts A."/>
            <person name="Altherr M."/>
            <person name="Ashworth L."/>
            <person name="Bajorek E."/>
            <person name="Black S."/>
            <person name="Branscomb E."/>
            <person name="Caenepeel S."/>
            <person name="Carrano A.V."/>
            <person name="Caoile C."/>
            <person name="Chan Y.M."/>
            <person name="Christensen M."/>
            <person name="Cleland C.A."/>
            <person name="Copeland A."/>
            <person name="Dalin E."/>
            <person name="Dehal P."/>
            <person name="Denys M."/>
            <person name="Detter J.C."/>
            <person name="Escobar J."/>
            <person name="Flowers D."/>
            <person name="Fotopulos D."/>
            <person name="Garcia C."/>
            <person name="Georgescu A.M."/>
            <person name="Glavina T."/>
            <person name="Gomez M."/>
            <person name="Gonzales E."/>
            <person name="Groza M."/>
            <person name="Hammon N."/>
            <person name="Hawkins T."/>
            <person name="Haydu L."/>
            <person name="Ho I."/>
            <person name="Huang W."/>
            <person name="Israni S."/>
            <person name="Jett J."/>
            <person name="Kadner K."/>
            <person name="Kimball H."/>
            <person name="Kobayashi A."/>
            <person name="Larionov V."/>
            <person name="Leem S.-H."/>
            <person name="Lopez F."/>
            <person name="Lou Y."/>
            <person name="Lowry S."/>
            <person name="Malfatti S."/>
            <person name="Martinez D."/>
            <person name="McCready P.M."/>
            <person name="Medina C."/>
            <person name="Morgan J."/>
            <person name="Nelson K."/>
            <person name="Nolan M."/>
            <person name="Ovcharenko I."/>
            <person name="Pitluck S."/>
            <person name="Pollard M."/>
            <person name="Popkie A.P."/>
            <person name="Predki P."/>
            <person name="Quan G."/>
            <person name="Ramirez L."/>
            <person name="Rash S."/>
            <person name="Retterer J."/>
            <person name="Rodriguez A."/>
            <person name="Rogers S."/>
            <person name="Salamov A."/>
            <person name="Salazar A."/>
            <person name="She X."/>
            <person name="Smith D."/>
            <person name="Slezak T."/>
            <person name="Solovyev V."/>
            <person name="Thayer N."/>
            <person name="Tice H."/>
            <person name="Tsai M."/>
            <person name="Ustaszewska A."/>
            <person name="Vo N."/>
            <person name="Wagner M."/>
            <person name="Wheeler J."/>
            <person name="Wu K."/>
            <person name="Xie G."/>
            <person name="Yang J."/>
            <person name="Dubchak I."/>
            <person name="Furey T.S."/>
            <person name="DeJong P."/>
            <person name="Dickson M."/>
            <person name="Gordon D."/>
            <person name="Eichler E.E."/>
            <person name="Pennacchio L.A."/>
            <person name="Richardson P."/>
            <person name="Stubbs L."/>
            <person name="Rokhsar D.S."/>
            <person name="Myers R.M."/>
            <person name="Rubin E.M."/>
            <person name="Lucas S.M."/>
        </authorList>
    </citation>
    <scope>NUCLEOTIDE SEQUENCE [LARGE SCALE GENOMIC DNA]</scope>
</reference>
<reference key="3">
    <citation type="submission" date="2005-07" db="EMBL/GenBank/DDBJ databases">
        <authorList>
            <person name="Mural R.J."/>
            <person name="Istrail S."/>
            <person name="Sutton G."/>
            <person name="Florea L."/>
            <person name="Halpern A.L."/>
            <person name="Mobarry C.M."/>
            <person name="Lippert R."/>
            <person name="Walenz B."/>
            <person name="Shatkay H."/>
            <person name="Dew I."/>
            <person name="Miller J.R."/>
            <person name="Flanigan M.J."/>
            <person name="Edwards N.J."/>
            <person name="Bolanos R."/>
            <person name="Fasulo D."/>
            <person name="Halldorsson B.V."/>
            <person name="Hannenhalli S."/>
            <person name="Turner R."/>
            <person name="Yooseph S."/>
            <person name="Lu F."/>
            <person name="Nusskern D.R."/>
            <person name="Shue B.C."/>
            <person name="Zheng X.H."/>
            <person name="Zhong F."/>
            <person name="Delcher A.L."/>
            <person name="Huson D.H."/>
            <person name="Kravitz S.A."/>
            <person name="Mouchard L."/>
            <person name="Reinert K."/>
            <person name="Remington K.A."/>
            <person name="Clark A.G."/>
            <person name="Waterman M.S."/>
            <person name="Eichler E.E."/>
            <person name="Adams M.D."/>
            <person name="Hunkapiller M.W."/>
            <person name="Myers E.W."/>
            <person name="Venter J.C."/>
        </authorList>
    </citation>
    <scope>NUCLEOTIDE SEQUENCE [LARGE SCALE GENOMIC DNA]</scope>
</reference>
<reference key="4">
    <citation type="journal article" date="2004" name="Genome Res.">
        <title>The status, quality, and expansion of the NIH full-length cDNA project: the Mammalian Gene Collection (MGC).</title>
        <authorList>
            <consortium name="The MGC Project Team"/>
        </authorList>
    </citation>
    <scope>NUCLEOTIDE SEQUENCE [LARGE SCALE MRNA] (ISOFORMS 1 AND 2)</scope>
    <source>
        <tissue>Cervix</tissue>
        <tissue>Uterus</tissue>
    </source>
</reference>
<reference key="5">
    <citation type="journal article" date="2011" name="BMC Syst. Biol.">
        <title>Initial characterization of the human central proteome.</title>
        <authorList>
            <person name="Burkard T.R."/>
            <person name="Planyavsky M."/>
            <person name="Kaupe I."/>
            <person name="Breitwieser F.P."/>
            <person name="Buerckstuemmer T."/>
            <person name="Bennett K.L."/>
            <person name="Superti-Furga G."/>
            <person name="Colinge J."/>
        </authorList>
    </citation>
    <scope>IDENTIFICATION BY MASS SPECTROMETRY [LARGE SCALE ANALYSIS]</scope>
</reference>
<reference key="6">
    <citation type="journal article" date="2018" name="Nucleic Acids Res.">
        <title>DDX49 is an RNA helicase that affects translation by regulating mRNA export and the levels of pre-ribosomal RNA.</title>
        <authorList>
            <person name="Awasthi S."/>
            <person name="Verma M."/>
            <person name="Mahesh A."/>
            <person name="K Khan M.I."/>
            <person name="Govindaraju G."/>
            <person name="Rajavelu A."/>
            <person name="Chavali P.L."/>
            <person name="Chavali S."/>
            <person name="Dhayalan A."/>
        </authorList>
    </citation>
    <scope>FUNCTION</scope>
    <scope>CATALYTIC ACTIVITY</scope>
    <scope>SUBCELLULAR LOCATION</scope>
</reference>
<reference key="7">
    <citation type="journal article" date="2022" name="Viruses">
        <title>DExD/H Box Helicases DDX24 and DDX49 Inhibit Reactivation of Kaposi's Sarcoma Associated Herpesvirus by Interacting with Viral mRNAs.</title>
        <authorList>
            <person name="Serfecz J.C."/>
            <person name="Hong Y."/>
            <person name="Gay L.A."/>
            <person name="Shekhar R."/>
            <person name="Turner P.C."/>
            <person name="Renne R."/>
        </authorList>
    </citation>
    <scope>FUNCTION</scope>
</reference>